<keyword id="KW-0150">Chloroplast</keyword>
<keyword id="KW-0472">Membrane</keyword>
<keyword id="KW-0520">NAD</keyword>
<keyword id="KW-0521">NADP</keyword>
<keyword id="KW-0934">Plastid</keyword>
<keyword id="KW-0618">Plastoquinone</keyword>
<keyword id="KW-0874">Quinone</keyword>
<keyword id="KW-0793">Thylakoid</keyword>
<keyword id="KW-1278">Translocase</keyword>
<keyword id="KW-0812">Transmembrane</keyword>
<keyword id="KW-1133">Transmembrane helix</keyword>
<dbReference type="EC" id="7.1.1.-" evidence="1"/>
<dbReference type="EMBL" id="DQ821119">
    <property type="protein sequence ID" value="ABG79655.1"/>
    <property type="molecule type" value="Genomic_DNA"/>
</dbReference>
<dbReference type="RefSeq" id="YP_001023756.1">
    <property type="nucleotide sequence ID" value="NC_008829.1"/>
</dbReference>
<dbReference type="SMR" id="A2T388"/>
<dbReference type="GeneID" id="4788147"/>
<dbReference type="GO" id="GO:0009535">
    <property type="term" value="C:chloroplast thylakoid membrane"/>
    <property type="evidence" value="ECO:0007669"/>
    <property type="project" value="UniProtKB-SubCell"/>
</dbReference>
<dbReference type="GO" id="GO:0003954">
    <property type="term" value="F:NADH dehydrogenase activity"/>
    <property type="evidence" value="ECO:0007669"/>
    <property type="project" value="TreeGrafter"/>
</dbReference>
<dbReference type="GO" id="GO:0016655">
    <property type="term" value="F:oxidoreductase activity, acting on NAD(P)H, quinone or similar compound as acceptor"/>
    <property type="evidence" value="ECO:0007669"/>
    <property type="project" value="UniProtKB-UniRule"/>
</dbReference>
<dbReference type="GO" id="GO:0048038">
    <property type="term" value="F:quinone binding"/>
    <property type="evidence" value="ECO:0007669"/>
    <property type="project" value="UniProtKB-KW"/>
</dbReference>
<dbReference type="GO" id="GO:0009060">
    <property type="term" value="P:aerobic respiration"/>
    <property type="evidence" value="ECO:0007669"/>
    <property type="project" value="TreeGrafter"/>
</dbReference>
<dbReference type="GO" id="GO:0019684">
    <property type="term" value="P:photosynthesis, light reaction"/>
    <property type="evidence" value="ECO:0007669"/>
    <property type="project" value="UniProtKB-UniRule"/>
</dbReference>
<dbReference type="HAMAP" id="MF_01350">
    <property type="entry name" value="NDH1_NuoH"/>
    <property type="match status" value="1"/>
</dbReference>
<dbReference type="InterPro" id="IPR001694">
    <property type="entry name" value="NADH_UbQ_OxRdtase_su1/FPO"/>
</dbReference>
<dbReference type="InterPro" id="IPR018086">
    <property type="entry name" value="NADH_UbQ_OxRdtase_su1_CS"/>
</dbReference>
<dbReference type="NCBIfam" id="NF004741">
    <property type="entry name" value="PRK06076.1-2"/>
    <property type="match status" value="1"/>
</dbReference>
<dbReference type="NCBIfam" id="NF004744">
    <property type="entry name" value="PRK06076.1-5"/>
    <property type="match status" value="1"/>
</dbReference>
<dbReference type="PANTHER" id="PTHR11432">
    <property type="entry name" value="NADH DEHYDROGENASE SUBUNIT 1"/>
    <property type="match status" value="1"/>
</dbReference>
<dbReference type="PANTHER" id="PTHR11432:SF3">
    <property type="entry name" value="NADH-UBIQUINONE OXIDOREDUCTASE CHAIN 1"/>
    <property type="match status" value="1"/>
</dbReference>
<dbReference type="Pfam" id="PF00146">
    <property type="entry name" value="NADHdh"/>
    <property type="match status" value="1"/>
</dbReference>
<dbReference type="PROSITE" id="PS00667">
    <property type="entry name" value="COMPLEX1_ND1_1"/>
    <property type="match status" value="1"/>
</dbReference>
<comment type="function">
    <text evidence="1">NDH shuttles electrons from NAD(P)H:plastoquinone, via FMN and iron-sulfur (Fe-S) centers, to quinones in the photosynthetic chain and possibly in a chloroplast respiratory chain. The immediate electron acceptor for the enzyme in this species is believed to be plastoquinone. Couples the redox reaction to proton translocation, and thus conserves the redox energy in a proton gradient.</text>
</comment>
<comment type="catalytic activity">
    <reaction evidence="1">
        <text>a plastoquinone + NADH + (n+1) H(+)(in) = a plastoquinol + NAD(+) + n H(+)(out)</text>
        <dbReference type="Rhea" id="RHEA:42608"/>
        <dbReference type="Rhea" id="RHEA-COMP:9561"/>
        <dbReference type="Rhea" id="RHEA-COMP:9562"/>
        <dbReference type="ChEBI" id="CHEBI:15378"/>
        <dbReference type="ChEBI" id="CHEBI:17757"/>
        <dbReference type="ChEBI" id="CHEBI:57540"/>
        <dbReference type="ChEBI" id="CHEBI:57945"/>
        <dbReference type="ChEBI" id="CHEBI:62192"/>
    </reaction>
</comment>
<comment type="catalytic activity">
    <reaction evidence="1">
        <text>a plastoquinone + NADPH + (n+1) H(+)(in) = a plastoquinol + NADP(+) + n H(+)(out)</text>
        <dbReference type="Rhea" id="RHEA:42612"/>
        <dbReference type="Rhea" id="RHEA-COMP:9561"/>
        <dbReference type="Rhea" id="RHEA-COMP:9562"/>
        <dbReference type="ChEBI" id="CHEBI:15378"/>
        <dbReference type="ChEBI" id="CHEBI:17757"/>
        <dbReference type="ChEBI" id="CHEBI:57783"/>
        <dbReference type="ChEBI" id="CHEBI:58349"/>
        <dbReference type="ChEBI" id="CHEBI:62192"/>
    </reaction>
</comment>
<comment type="subunit">
    <text evidence="1">NDH is composed of at least 16 different subunits, 5 of which are encoded in the nucleus.</text>
</comment>
<comment type="subcellular location">
    <subcellularLocation>
        <location evidence="1">Plastid</location>
        <location evidence="1">Chloroplast thylakoid membrane</location>
        <topology evidence="1">Multi-pass membrane protein</topology>
    </subcellularLocation>
</comment>
<comment type="similarity">
    <text evidence="1">Belongs to the complex I subunit 1 family.</text>
</comment>
<proteinExistence type="inferred from homology"/>
<protein>
    <recommendedName>
        <fullName evidence="1">NAD(P)H-quinone oxidoreductase subunit 1, chloroplastic</fullName>
        <ecNumber evidence="1">7.1.1.-</ecNumber>
    </recommendedName>
    <alternativeName>
        <fullName evidence="1">NAD(P)H dehydrogenase subunit 1</fullName>
        <shortName evidence="1">NDH subunit 1</shortName>
    </alternativeName>
    <alternativeName>
        <fullName evidence="1">NADH-plastoquinone oxidoreductase subunit 1</fullName>
    </alternativeName>
</protein>
<gene>
    <name evidence="1" type="primary">ndhA</name>
</gene>
<feature type="chain" id="PRO_0000298864" description="NAD(P)H-quinone oxidoreductase subunit 1, chloroplastic">
    <location>
        <begin position="1"/>
        <end position="369"/>
    </location>
</feature>
<feature type="transmembrane region" description="Helical" evidence="1">
    <location>
        <begin position="29"/>
        <end position="49"/>
    </location>
</feature>
<feature type="transmembrane region" description="Helical" evidence="1">
    <location>
        <begin position="97"/>
        <end position="117"/>
    </location>
</feature>
<feature type="transmembrane region" description="Helical" evidence="1">
    <location>
        <begin position="129"/>
        <end position="149"/>
    </location>
</feature>
<feature type="transmembrane region" description="Helical" evidence="1">
    <location>
        <begin position="167"/>
        <end position="187"/>
    </location>
</feature>
<feature type="transmembrane region" description="Helical" evidence="1">
    <location>
        <begin position="205"/>
        <end position="225"/>
    </location>
</feature>
<feature type="transmembrane region" description="Helical" evidence="1">
    <location>
        <begin position="255"/>
        <end position="275"/>
    </location>
</feature>
<feature type="transmembrane region" description="Helical" evidence="1">
    <location>
        <begin position="305"/>
        <end position="325"/>
    </location>
</feature>
<feature type="transmembrane region" description="Helical" evidence="1">
    <location>
        <begin position="348"/>
        <end position="368"/>
    </location>
</feature>
<evidence type="ECO:0000255" key="1">
    <source>
        <dbReference type="HAMAP-Rule" id="MF_01350"/>
    </source>
</evidence>
<geneLocation type="chloroplast"/>
<reference key="1">
    <citation type="journal article" date="2007" name="Am. Fern J.">
        <title>The complete plastid genome sequence of Angiopteris evecta (G. Forst.) Hoffm. (Marattiaceae).</title>
        <authorList>
            <person name="Roper J.M."/>
            <person name="Hansen S.K."/>
            <person name="Wolf P.G."/>
            <person name="Karol K.G."/>
            <person name="Mandoli D.F."/>
            <person name="Everett K.D.E."/>
            <person name="Kuehl J.V."/>
            <person name="Boore J.L."/>
        </authorList>
    </citation>
    <scope>NUCLEOTIDE SEQUENCE [LARGE SCALE GENOMIC DNA]</scope>
</reference>
<accession>A2T388</accession>
<organism>
    <name type="scientific">Angiopteris evecta</name>
    <name type="common">Mule's foot fern</name>
    <name type="synonym">Polypodium evectum</name>
    <dbReference type="NCBI Taxonomy" id="13825"/>
    <lineage>
        <taxon>Eukaryota</taxon>
        <taxon>Viridiplantae</taxon>
        <taxon>Streptophyta</taxon>
        <taxon>Embryophyta</taxon>
        <taxon>Tracheophyta</taxon>
        <taxon>Polypodiopsida</taxon>
        <taxon>Marattiidae</taxon>
        <taxon>Marattiales</taxon>
        <taxon>Marattiaceae</taxon>
        <taxon>Angiopteris</taxon>
    </lineage>
</organism>
<name>NU1C_ANGEV</name>
<sequence length="369" mass="40604">MVLDITGVEKQGIILFSESELSKEFLELIWIIVSILTTIVGVTLGVLVIVWLERKISAGIQQRIGPEYAGPLGIIQALADGIKLLLKEDVIPARGDIWLFNVGPAIVVIPVFLSYLVIPFGKHIILADLGIGVFFWIAVSSIAPLGLLMAGYGSNNKYSFLGGLRAAAQSISYEIPLALCVLSISLLSNSLSTVDIVDAQSKYGLLGWNLWRQPIGFLIFFISSLAECERLPFDPPEAEEELVAGYQTEYSGIKFGLFYVGSYLNLLVSSLFVTVLYLGGWDLSIPFLPTSNQLTWILTNGTFDIINAIIGIIITLTKAYLFLFVSIMTRWTLPRVRIDQLLDLGWKFLLPVALGNLLLTASFQILLLD</sequence>